<comment type="function">
    <text evidence="1">Involved in the gluconeogenesis. Catalyzes stereospecifically the conversion of dihydroxyacetone phosphate (DHAP) to D-glyceraldehyde-3-phosphate (G3P).</text>
</comment>
<comment type="catalytic activity">
    <reaction evidence="1">
        <text>D-glyceraldehyde 3-phosphate = dihydroxyacetone phosphate</text>
        <dbReference type="Rhea" id="RHEA:18585"/>
        <dbReference type="ChEBI" id="CHEBI:57642"/>
        <dbReference type="ChEBI" id="CHEBI:59776"/>
        <dbReference type="EC" id="5.3.1.1"/>
    </reaction>
</comment>
<comment type="pathway">
    <text evidence="1">Carbohydrate biosynthesis; gluconeogenesis.</text>
</comment>
<comment type="pathway">
    <text evidence="1">Carbohydrate degradation; glycolysis; D-glyceraldehyde 3-phosphate from glycerone phosphate: step 1/1.</text>
</comment>
<comment type="subunit">
    <text evidence="1">Homodimer.</text>
</comment>
<comment type="subcellular location">
    <subcellularLocation>
        <location evidence="1">Cytoplasm</location>
    </subcellularLocation>
</comment>
<comment type="similarity">
    <text evidence="1">Belongs to the triosephosphate isomerase family.</text>
</comment>
<gene>
    <name evidence="1" type="primary">tpiA</name>
    <name type="ordered locus">Wbm0408</name>
</gene>
<organism>
    <name type="scientific">Wolbachia sp. subsp. Brugia malayi (strain TRS)</name>
    <dbReference type="NCBI Taxonomy" id="292805"/>
    <lineage>
        <taxon>Bacteria</taxon>
        <taxon>Pseudomonadati</taxon>
        <taxon>Pseudomonadota</taxon>
        <taxon>Alphaproteobacteria</taxon>
        <taxon>Rickettsiales</taxon>
        <taxon>Anaplasmataceae</taxon>
        <taxon>Wolbachieae</taxon>
        <taxon>Wolbachia</taxon>
    </lineage>
</organism>
<feature type="chain" id="PRO_1000009862" description="Triosephosphate isomerase">
    <location>
        <begin position="1"/>
        <end position="233"/>
    </location>
</feature>
<feature type="active site" description="Electrophile" evidence="1">
    <location>
        <position position="91"/>
    </location>
</feature>
<feature type="active site" description="Proton acceptor" evidence="1">
    <location>
        <position position="155"/>
    </location>
</feature>
<feature type="binding site" evidence="1">
    <location>
        <begin position="8"/>
        <end position="10"/>
    </location>
    <ligand>
        <name>substrate</name>
    </ligand>
</feature>
<feature type="binding site" evidence="1">
    <location>
        <position position="161"/>
    </location>
    <ligand>
        <name>substrate</name>
    </ligand>
</feature>
<feature type="binding site" evidence="1">
    <location>
        <position position="192"/>
    </location>
    <ligand>
        <name>substrate</name>
    </ligand>
</feature>
<sequence>MSFLIVANWKMNGTRSLFVNFIGKLNDKSNEITSKLVICPPFTSLPGNIELNSNISIGAQNCHYKKSGSYTGEISAEMLKELGCTYVILGHSERTHETNGEIKLKSETAIESGLHPIICVGENLEDRESSKTKEVVEYQCKSRLPIHGEYTVAYEPIWAIGTGHVPSNNAIAEVIEVIQSYTSKKHVIYGGSVSLENIENLSNILNLSGVLIGSASLDFDRFHKIVQQVEKAY</sequence>
<protein>
    <recommendedName>
        <fullName evidence="1">Triosephosphate isomerase</fullName>
        <shortName evidence="1">TIM</shortName>
        <shortName evidence="1">TPI</shortName>
        <ecNumber evidence="1">5.3.1.1</ecNumber>
    </recommendedName>
    <alternativeName>
        <fullName evidence="1">Triose-phosphate isomerase</fullName>
    </alternativeName>
</protein>
<dbReference type="EC" id="5.3.1.1" evidence="1"/>
<dbReference type="EMBL" id="AE017321">
    <property type="protein sequence ID" value="AAW70996.1"/>
    <property type="molecule type" value="Genomic_DNA"/>
</dbReference>
<dbReference type="RefSeq" id="WP_011256606.1">
    <property type="nucleotide sequence ID" value="NC_006833.1"/>
</dbReference>
<dbReference type="SMR" id="Q5GSM8"/>
<dbReference type="STRING" id="292805.Wbm0408"/>
<dbReference type="KEGG" id="wbm:Wbm0408"/>
<dbReference type="eggNOG" id="COG0149">
    <property type="taxonomic scope" value="Bacteria"/>
</dbReference>
<dbReference type="HOGENOM" id="CLU_024251_2_3_5"/>
<dbReference type="UniPathway" id="UPA00109">
    <property type="reaction ID" value="UER00189"/>
</dbReference>
<dbReference type="UniPathway" id="UPA00138"/>
<dbReference type="Proteomes" id="UP000000534">
    <property type="component" value="Chromosome"/>
</dbReference>
<dbReference type="GO" id="GO:0005829">
    <property type="term" value="C:cytosol"/>
    <property type="evidence" value="ECO:0007669"/>
    <property type="project" value="TreeGrafter"/>
</dbReference>
<dbReference type="GO" id="GO:0004807">
    <property type="term" value="F:triose-phosphate isomerase activity"/>
    <property type="evidence" value="ECO:0007669"/>
    <property type="project" value="UniProtKB-UniRule"/>
</dbReference>
<dbReference type="GO" id="GO:0006094">
    <property type="term" value="P:gluconeogenesis"/>
    <property type="evidence" value="ECO:0007669"/>
    <property type="project" value="UniProtKB-UniRule"/>
</dbReference>
<dbReference type="GO" id="GO:0046166">
    <property type="term" value="P:glyceraldehyde-3-phosphate biosynthetic process"/>
    <property type="evidence" value="ECO:0007669"/>
    <property type="project" value="TreeGrafter"/>
</dbReference>
<dbReference type="GO" id="GO:0019563">
    <property type="term" value="P:glycerol catabolic process"/>
    <property type="evidence" value="ECO:0007669"/>
    <property type="project" value="TreeGrafter"/>
</dbReference>
<dbReference type="GO" id="GO:0006096">
    <property type="term" value="P:glycolytic process"/>
    <property type="evidence" value="ECO:0007669"/>
    <property type="project" value="UniProtKB-UniRule"/>
</dbReference>
<dbReference type="CDD" id="cd00311">
    <property type="entry name" value="TIM"/>
    <property type="match status" value="1"/>
</dbReference>
<dbReference type="Gene3D" id="3.20.20.70">
    <property type="entry name" value="Aldolase class I"/>
    <property type="match status" value="1"/>
</dbReference>
<dbReference type="HAMAP" id="MF_00147_B">
    <property type="entry name" value="TIM_B"/>
    <property type="match status" value="1"/>
</dbReference>
<dbReference type="InterPro" id="IPR013785">
    <property type="entry name" value="Aldolase_TIM"/>
</dbReference>
<dbReference type="InterPro" id="IPR035990">
    <property type="entry name" value="TIM_sf"/>
</dbReference>
<dbReference type="InterPro" id="IPR022896">
    <property type="entry name" value="TrioseP_Isoase_bac/euk"/>
</dbReference>
<dbReference type="InterPro" id="IPR000652">
    <property type="entry name" value="Triosephosphate_isomerase"/>
</dbReference>
<dbReference type="InterPro" id="IPR020861">
    <property type="entry name" value="Triosephosphate_isomerase_AS"/>
</dbReference>
<dbReference type="NCBIfam" id="NF011163">
    <property type="entry name" value="PRK14565.1"/>
    <property type="match status" value="1"/>
</dbReference>
<dbReference type="NCBIfam" id="TIGR00419">
    <property type="entry name" value="tim"/>
    <property type="match status" value="1"/>
</dbReference>
<dbReference type="PANTHER" id="PTHR21139">
    <property type="entry name" value="TRIOSEPHOSPHATE ISOMERASE"/>
    <property type="match status" value="1"/>
</dbReference>
<dbReference type="PANTHER" id="PTHR21139:SF42">
    <property type="entry name" value="TRIOSEPHOSPHATE ISOMERASE"/>
    <property type="match status" value="1"/>
</dbReference>
<dbReference type="Pfam" id="PF00121">
    <property type="entry name" value="TIM"/>
    <property type="match status" value="1"/>
</dbReference>
<dbReference type="SUPFAM" id="SSF51351">
    <property type="entry name" value="Triosephosphate isomerase (TIM)"/>
    <property type="match status" value="1"/>
</dbReference>
<dbReference type="PROSITE" id="PS00171">
    <property type="entry name" value="TIM_1"/>
    <property type="match status" value="1"/>
</dbReference>
<dbReference type="PROSITE" id="PS51440">
    <property type="entry name" value="TIM_2"/>
    <property type="match status" value="1"/>
</dbReference>
<proteinExistence type="inferred from homology"/>
<name>TPIS_WOLTR</name>
<evidence type="ECO:0000255" key="1">
    <source>
        <dbReference type="HAMAP-Rule" id="MF_00147"/>
    </source>
</evidence>
<keyword id="KW-0963">Cytoplasm</keyword>
<keyword id="KW-0312">Gluconeogenesis</keyword>
<keyword id="KW-0324">Glycolysis</keyword>
<keyword id="KW-0413">Isomerase</keyword>
<keyword id="KW-1185">Reference proteome</keyword>
<accession>Q5GSM8</accession>
<reference key="1">
    <citation type="journal article" date="2005" name="PLoS Biol.">
        <title>The Wolbachia genome of Brugia malayi: endosymbiont evolution within a human pathogenic nematode.</title>
        <authorList>
            <person name="Foster J."/>
            <person name="Ganatra M."/>
            <person name="Kamal I."/>
            <person name="Ware J."/>
            <person name="Makarova K."/>
            <person name="Ivanova N."/>
            <person name="Bhattacharyya A."/>
            <person name="Kapatral V."/>
            <person name="Kumar S."/>
            <person name="Posfai J."/>
            <person name="Vincze T."/>
            <person name="Ingram J."/>
            <person name="Moran L."/>
            <person name="Lapidus A."/>
            <person name="Omelchenko M."/>
            <person name="Kyrpides N."/>
            <person name="Ghedin E."/>
            <person name="Wang S."/>
            <person name="Goltsman E."/>
            <person name="Joukov V."/>
            <person name="Ostrovskaya O."/>
            <person name="Tsukerman K."/>
            <person name="Mazur M."/>
            <person name="Comb D."/>
            <person name="Koonin E."/>
            <person name="Slatko B."/>
        </authorList>
    </citation>
    <scope>NUCLEOTIDE SEQUENCE [LARGE SCALE GENOMIC DNA]</scope>
    <source>
        <strain>TRS</strain>
    </source>
</reference>